<keyword id="KW-0020">Allergen</keyword>
<proteinExistence type="evidence at protein level"/>
<comment type="allergen">
    <text>Causes an allergic reaction in human. Causes grass pollen allergy.</text>
</comment>
<comment type="similarity">
    <text evidence="1">Belongs to the Poa p IX/Phl p VI allergen family.</text>
</comment>
<sequence length="175" mass="17860">AKYDAFIAALTEALRVIAGAFEVHAVKPATEEVPAAKIPAGELQIVDKIDAAFKIAATAANSAPANDKFTVFEGAFNKAIKERHGGAYETYKFIPSLEASRSKQAYGATVARAPEVKYAVFEAGLTKAITAMSEAQKVAKPVRSVTAAAAGAATAAGGAATVAASRPTSAGGYKV</sequence>
<reference key="1">
    <citation type="journal article" date="1995" name="Clin. Exp. Allergy">
        <title>Cloning, sequencing and expression in Escherichia coli of Pha a 1 and four isoforms of Pha a 5, the major allergens of canary grass pollen.</title>
        <authorList>
            <person name="Suphioglu C."/>
            <person name="Singh M.B."/>
        </authorList>
    </citation>
    <scope>NUCLEOTIDE SEQUENCE</scope>
    <source>
        <tissue>Pollen</tissue>
    </source>
</reference>
<organism>
    <name type="scientific">Phalaris aquatica</name>
    <name type="common">Canary grass</name>
    <dbReference type="NCBI Taxonomy" id="28479"/>
    <lineage>
        <taxon>Eukaryota</taxon>
        <taxon>Viridiplantae</taxon>
        <taxon>Streptophyta</taxon>
        <taxon>Embryophyta</taxon>
        <taxon>Tracheophyta</taxon>
        <taxon>Spermatophyta</taxon>
        <taxon>Magnoliopsida</taxon>
        <taxon>Liliopsida</taxon>
        <taxon>Poales</taxon>
        <taxon>Poaceae</taxon>
        <taxon>BOP clade</taxon>
        <taxon>Pooideae</taxon>
        <taxon>Poodae</taxon>
        <taxon>Poeae</taxon>
        <taxon>Poeae Chloroplast Group 1 (Aveneae type)</taxon>
        <taxon>Phalaridinae</taxon>
        <taxon>Phalaris</taxon>
    </lineage>
</organism>
<evidence type="ECO:0000305" key="1"/>
<name>MPA54_PHAAQ</name>
<protein>
    <recommendedName>
        <fullName>Major pollen allergen Pha a 5.4</fullName>
    </recommendedName>
    <alternativeName>
        <fullName>Allergen Pha a 5</fullName>
    </alternativeName>
    <allergenName>Pha a 5.4</allergenName>
</protein>
<dbReference type="SMR" id="P56167"/>
<dbReference type="Allergome" id="548">
    <property type="allergen name" value="Pha a 5"/>
</dbReference>
<dbReference type="Gene3D" id="1.20.120.320">
    <property type="entry name" value="Group V grass pollen allergen"/>
    <property type="match status" value="2"/>
</dbReference>
<dbReference type="InterPro" id="IPR002914">
    <property type="entry name" value="Poa_pIX/Phl_pVI"/>
</dbReference>
<dbReference type="InterPro" id="IPR035506">
    <property type="entry name" value="Pollen_allergen/Os"/>
</dbReference>
<dbReference type="Pfam" id="PF01620">
    <property type="entry name" value="Pollen_allerg_2"/>
    <property type="match status" value="2"/>
</dbReference>
<dbReference type="PRINTS" id="PR00833">
    <property type="entry name" value="POAALLERGEN"/>
</dbReference>
<dbReference type="SUPFAM" id="SSF81736">
    <property type="entry name" value="Group V grass pollen allergen"/>
    <property type="match status" value="2"/>
</dbReference>
<accession>P56167</accession>
<feature type="chain" id="PRO_0000096550" description="Major pollen allergen Pha a 5.4">
    <location>
        <begin position="1" status="less than"/>
        <end position="175"/>
    </location>
</feature>
<feature type="non-terminal residue">
    <location>
        <position position="1"/>
    </location>
</feature>